<keyword id="KW-0029">Amino-acid transport</keyword>
<keyword id="KW-0072">Autophagy</keyword>
<keyword id="KW-0472">Membrane</keyword>
<keyword id="KW-1185">Reference proteome</keyword>
<keyword id="KW-0812">Transmembrane</keyword>
<keyword id="KW-1133">Transmembrane helix</keyword>
<keyword id="KW-0813">Transport</keyword>
<keyword id="KW-0926">Vacuole</keyword>
<comment type="function">
    <text evidence="1">Vacuolar effluxer which mediate the efflux of amino acids resulting from autophagic degradation. The release of autophagic amino acids allows the maintenance of protein synthesis and viability during nitrogen starvation (By similarity).</text>
</comment>
<comment type="subcellular location">
    <subcellularLocation>
        <location evidence="1">Vacuole membrane</location>
        <topology evidence="1">Multi-pass membrane protein</topology>
    </subcellularLocation>
    <text evidence="1">Vacuole and punctate structures.</text>
</comment>
<comment type="similarity">
    <text evidence="4">Belongs to the ATG22 family.</text>
</comment>
<dbReference type="EMBL" id="AE017346">
    <property type="protein sequence ID" value="AAW44406.2"/>
    <property type="molecule type" value="Genomic_DNA"/>
</dbReference>
<dbReference type="RefSeq" id="XP_571713.1">
    <property type="nucleotide sequence ID" value="XM_571713.1"/>
</dbReference>
<dbReference type="FunCoup" id="P0CM32">
    <property type="interactions" value="5"/>
</dbReference>
<dbReference type="STRING" id="214684.P0CM32"/>
<dbReference type="PaxDb" id="214684-P0CM32"/>
<dbReference type="eggNOG" id="ENOG502QR9I">
    <property type="taxonomic scope" value="Eukaryota"/>
</dbReference>
<dbReference type="InParanoid" id="P0CM32"/>
<dbReference type="Proteomes" id="UP000002149">
    <property type="component" value="Chromosome 6"/>
</dbReference>
<dbReference type="GO" id="GO:0005774">
    <property type="term" value="C:vacuolar membrane"/>
    <property type="evidence" value="ECO:0007669"/>
    <property type="project" value="UniProtKB-SubCell"/>
</dbReference>
<dbReference type="GO" id="GO:0032974">
    <property type="term" value="P:amino acid transmembrane export from vacuole"/>
    <property type="evidence" value="ECO:0000318"/>
    <property type="project" value="GO_Central"/>
</dbReference>
<dbReference type="GO" id="GO:0006914">
    <property type="term" value="P:autophagy"/>
    <property type="evidence" value="ECO:0007669"/>
    <property type="project" value="UniProtKB-KW"/>
</dbReference>
<dbReference type="CDD" id="cd17483">
    <property type="entry name" value="MFS_Atg22_like"/>
    <property type="match status" value="1"/>
</dbReference>
<dbReference type="FunFam" id="1.20.1250.20:FF:000817">
    <property type="entry name" value="Autophagy-related protein 22"/>
    <property type="match status" value="1"/>
</dbReference>
<dbReference type="Gene3D" id="1.20.1250.20">
    <property type="entry name" value="MFS general substrate transporter like domains"/>
    <property type="match status" value="1"/>
</dbReference>
<dbReference type="InterPro" id="IPR044738">
    <property type="entry name" value="Atg22"/>
</dbReference>
<dbReference type="InterPro" id="IPR024671">
    <property type="entry name" value="Atg22-like"/>
</dbReference>
<dbReference type="InterPro" id="IPR050495">
    <property type="entry name" value="ATG22/LtaA_families"/>
</dbReference>
<dbReference type="InterPro" id="IPR036259">
    <property type="entry name" value="MFS_trans_sf"/>
</dbReference>
<dbReference type="PANTHER" id="PTHR23519">
    <property type="entry name" value="AUTOPHAGY-RELATED PROTEIN 22"/>
    <property type="match status" value="1"/>
</dbReference>
<dbReference type="PANTHER" id="PTHR23519:SF1">
    <property type="entry name" value="AUTOPHAGY-RELATED PROTEIN 22"/>
    <property type="match status" value="1"/>
</dbReference>
<dbReference type="Pfam" id="PF11700">
    <property type="entry name" value="ATG22"/>
    <property type="match status" value="1"/>
</dbReference>
<dbReference type="SUPFAM" id="SSF103473">
    <property type="entry name" value="MFS general substrate transporter"/>
    <property type="match status" value="1"/>
</dbReference>
<sequence>MGSSMPPPHVRAWYSYAFAAEVFSACALAIFLPITLEQMAREVGYYAPELTETCVINDSSSDVTGRLCKARILGVWIDTASFSMYVKSIAVACQAICIISIGPLADIAYWRKRLLLTFAYSGSLSGILFLLFPPLPYAWTPIMAAILNIVGNATYSTSIVCSNAFLPGLAKEDVDVQKAWEEATSEGLQDGLRDVHEDTDEENTGSVSREDEATHLLPDRLIPAVCAISTQDLALSDPLAKLIEPSNAKKHYESRLSLTTSRLSSTGTAIGFFSGVSVLTLLLIPVTALGGSTFSMRLAIGLSGVWWALFTVPTCIGLPGGAPGHGSDFSASQVKKAWVKIGKMVAPKQIHQLPNLYIFLLAWIFLSDGFHTTTYAAILYASSVLSMSAPKIILVGILVQLAAVVSSVLVPRVQRRLSTTSSKPVTNYKVLLAGVVAAAFIPVYTCAGLVLPFGGLRSEEEMYVLAVWFGLVFGPFLSYSRAVYAELIPPGHESTFFSLFAFTDKSASFIGPAAVGLISDLTGNIRYGFLFLLVMLVVPIPVLGRVAVERGRREAVEWAERSRKEMSDERV</sequence>
<reference key="1">
    <citation type="journal article" date="2005" name="Science">
        <title>The genome of the basidiomycetous yeast and human pathogen Cryptococcus neoformans.</title>
        <authorList>
            <person name="Loftus B.J."/>
            <person name="Fung E."/>
            <person name="Roncaglia P."/>
            <person name="Rowley D."/>
            <person name="Amedeo P."/>
            <person name="Bruno D."/>
            <person name="Vamathevan J."/>
            <person name="Miranda M."/>
            <person name="Anderson I.J."/>
            <person name="Fraser J.A."/>
            <person name="Allen J.E."/>
            <person name="Bosdet I.E."/>
            <person name="Brent M.R."/>
            <person name="Chiu R."/>
            <person name="Doering T.L."/>
            <person name="Donlin M.J."/>
            <person name="D'Souza C.A."/>
            <person name="Fox D.S."/>
            <person name="Grinberg V."/>
            <person name="Fu J."/>
            <person name="Fukushima M."/>
            <person name="Haas B.J."/>
            <person name="Huang J.C."/>
            <person name="Janbon G."/>
            <person name="Jones S.J.M."/>
            <person name="Koo H.L."/>
            <person name="Krzywinski M.I."/>
            <person name="Kwon-Chung K.J."/>
            <person name="Lengeler K.B."/>
            <person name="Maiti R."/>
            <person name="Marra M.A."/>
            <person name="Marra R.E."/>
            <person name="Mathewson C.A."/>
            <person name="Mitchell T.G."/>
            <person name="Pertea M."/>
            <person name="Riggs F.R."/>
            <person name="Salzberg S.L."/>
            <person name="Schein J.E."/>
            <person name="Shvartsbeyn A."/>
            <person name="Shin H."/>
            <person name="Shumway M."/>
            <person name="Specht C.A."/>
            <person name="Suh B.B."/>
            <person name="Tenney A."/>
            <person name="Utterback T.R."/>
            <person name="Wickes B.L."/>
            <person name="Wortman J.R."/>
            <person name="Wye N.H."/>
            <person name="Kronstad J.W."/>
            <person name="Lodge J.K."/>
            <person name="Heitman J."/>
            <person name="Davis R.W."/>
            <person name="Fraser C.M."/>
            <person name="Hyman R.W."/>
        </authorList>
    </citation>
    <scope>NUCLEOTIDE SEQUENCE [LARGE SCALE GENOMIC DNA]</scope>
    <source>
        <strain>JEC21 / ATCC MYA-565</strain>
    </source>
</reference>
<protein>
    <recommendedName>
        <fullName>Autophagy-related protein 22</fullName>
    </recommendedName>
</protein>
<gene>
    <name type="primary">ATG22</name>
    <name type="ordered locus">CNF00360</name>
</gene>
<name>ATG22_CRYNJ</name>
<proteinExistence type="inferred from homology"/>
<organism>
    <name type="scientific">Cryptococcus neoformans var. neoformans serotype D (strain JEC21 / ATCC MYA-565)</name>
    <name type="common">Filobasidiella neoformans</name>
    <dbReference type="NCBI Taxonomy" id="214684"/>
    <lineage>
        <taxon>Eukaryota</taxon>
        <taxon>Fungi</taxon>
        <taxon>Dikarya</taxon>
        <taxon>Basidiomycota</taxon>
        <taxon>Agaricomycotina</taxon>
        <taxon>Tremellomycetes</taxon>
        <taxon>Tremellales</taxon>
        <taxon>Cryptococcaceae</taxon>
        <taxon>Cryptococcus</taxon>
        <taxon>Cryptococcus neoformans species complex</taxon>
    </lineage>
</organism>
<evidence type="ECO:0000250" key="1"/>
<evidence type="ECO:0000255" key="2"/>
<evidence type="ECO:0000256" key="3">
    <source>
        <dbReference type="SAM" id="MobiDB-lite"/>
    </source>
</evidence>
<evidence type="ECO:0000305" key="4"/>
<feature type="chain" id="PRO_0000207621" description="Autophagy-related protein 22">
    <location>
        <begin position="1"/>
        <end position="571"/>
    </location>
</feature>
<feature type="transmembrane region" description="Helical" evidence="2">
    <location>
        <begin position="16"/>
        <end position="36"/>
    </location>
</feature>
<feature type="transmembrane region" description="Helical" evidence="2">
    <location>
        <begin position="89"/>
        <end position="109"/>
    </location>
</feature>
<feature type="transmembrane region" description="Helical" evidence="2">
    <location>
        <begin position="127"/>
        <end position="147"/>
    </location>
</feature>
<feature type="transmembrane region" description="Helical" evidence="2">
    <location>
        <begin position="149"/>
        <end position="169"/>
    </location>
</feature>
<feature type="transmembrane region" description="Helical" evidence="2">
    <location>
        <begin position="269"/>
        <end position="289"/>
    </location>
</feature>
<feature type="transmembrane region" description="Helical" evidence="2">
    <location>
        <begin position="298"/>
        <end position="318"/>
    </location>
</feature>
<feature type="transmembrane region" description="Helical" evidence="2">
    <location>
        <begin position="358"/>
        <end position="378"/>
    </location>
</feature>
<feature type="transmembrane region" description="Helical" evidence="2">
    <location>
        <begin position="390"/>
        <end position="410"/>
    </location>
</feature>
<feature type="transmembrane region" description="Helical" evidence="2">
    <location>
        <begin position="430"/>
        <end position="450"/>
    </location>
</feature>
<feature type="transmembrane region" description="Helical" evidence="2">
    <location>
        <begin position="463"/>
        <end position="483"/>
    </location>
</feature>
<feature type="transmembrane region" description="Helical" evidence="2">
    <location>
        <begin position="498"/>
        <end position="518"/>
    </location>
</feature>
<feature type="transmembrane region" description="Helical" evidence="2">
    <location>
        <begin position="528"/>
        <end position="548"/>
    </location>
</feature>
<feature type="region of interest" description="Disordered" evidence="3">
    <location>
        <begin position="185"/>
        <end position="210"/>
    </location>
</feature>
<accession>P0CM32</accession>
<accession>Q55QA3</accession>
<accession>Q5KFW2</accession>